<accession>A0A075B6I9</accession>
<dbReference type="EMBL" id="AC245291">
    <property type="status" value="NOT_ANNOTATED_CDS"/>
    <property type="molecule type" value="Genomic_DNA"/>
</dbReference>
<dbReference type="EMDB" id="EMD-22491"/>
<dbReference type="EMDB" id="EMD-22492"/>
<dbReference type="EMDB" id="EMD-22494"/>
<dbReference type="SMR" id="A0A075B6I9"/>
<dbReference type="FunCoup" id="A0A075B6I9">
    <property type="interactions" value="212"/>
</dbReference>
<dbReference type="IMGT_GENE-DB" id="IGLV7-46"/>
<dbReference type="BioMuta" id="IGLV7-46"/>
<dbReference type="jPOST" id="A0A075B6I9"/>
<dbReference type="MassIVE" id="A0A075B6I9"/>
<dbReference type="Ensembl" id="ENST00000390295.3">
    <property type="protein sequence ID" value="ENSP00000374830.2"/>
    <property type="gene ID" value="ENSG00000211649.3"/>
</dbReference>
<dbReference type="UCSC" id="uc062cbr.1">
    <property type="organism name" value="human"/>
</dbReference>
<dbReference type="AGR" id="HGNC:5930"/>
<dbReference type="GeneCards" id="IGLV7-46"/>
<dbReference type="HGNC" id="HGNC:5930">
    <property type="gene designation" value="IGLV7-46"/>
</dbReference>
<dbReference type="HPA" id="ENSG00000211649">
    <property type="expression patterns" value="Tissue enhanced (intestine, lymphoid tissue, stomach, urinary bladder)"/>
</dbReference>
<dbReference type="neXtProt" id="NX_A0A075B6I9"/>
<dbReference type="OpenTargets" id="ENSG00000211649"/>
<dbReference type="VEuPathDB" id="HostDB:ENSG00000211649"/>
<dbReference type="GeneTree" id="ENSGT00940000162204"/>
<dbReference type="HOGENOM" id="CLU_077975_4_0_1"/>
<dbReference type="InParanoid" id="A0A075B6I9"/>
<dbReference type="OMA" id="EDKAECY"/>
<dbReference type="PAN-GO" id="A0A075B6I9">
    <property type="GO annotations" value="3 GO annotations based on evolutionary models"/>
</dbReference>
<dbReference type="PhylomeDB" id="A0A075B6I9"/>
<dbReference type="SignaLink" id="A0A075B6I9"/>
<dbReference type="Pharos" id="A0A075B6I9">
    <property type="development level" value="Tdark"/>
</dbReference>
<dbReference type="PRO" id="PR:A0A075B6I9"/>
<dbReference type="Proteomes" id="UP000005640">
    <property type="component" value="Chromosome 22"/>
</dbReference>
<dbReference type="RNAct" id="A0A075B6I9">
    <property type="molecule type" value="protein"/>
</dbReference>
<dbReference type="Bgee" id="ENSG00000211649">
    <property type="expression patterns" value="Expressed in rectum and 87 other cell types or tissues"/>
</dbReference>
<dbReference type="GO" id="GO:0005576">
    <property type="term" value="C:extracellular region"/>
    <property type="evidence" value="ECO:0007669"/>
    <property type="project" value="UniProtKB-SubCell"/>
</dbReference>
<dbReference type="GO" id="GO:0019814">
    <property type="term" value="C:immunoglobulin complex"/>
    <property type="evidence" value="ECO:0000318"/>
    <property type="project" value="GO_Central"/>
</dbReference>
<dbReference type="GO" id="GO:0005886">
    <property type="term" value="C:plasma membrane"/>
    <property type="evidence" value="ECO:0007669"/>
    <property type="project" value="UniProtKB-SubCell"/>
</dbReference>
<dbReference type="GO" id="GO:0002250">
    <property type="term" value="P:adaptive immune response"/>
    <property type="evidence" value="ECO:0007669"/>
    <property type="project" value="UniProtKB-KW"/>
</dbReference>
<dbReference type="GO" id="GO:0006955">
    <property type="term" value="P:immune response"/>
    <property type="evidence" value="ECO:0000318"/>
    <property type="project" value="GO_Central"/>
</dbReference>
<dbReference type="FunFam" id="2.60.40.10:FF:001479">
    <property type="entry name" value="Immunoglobulin lambda variable 7-43"/>
    <property type="match status" value="1"/>
</dbReference>
<dbReference type="Gene3D" id="2.60.40.10">
    <property type="entry name" value="Immunoglobulins"/>
    <property type="match status" value="1"/>
</dbReference>
<dbReference type="InterPro" id="IPR007110">
    <property type="entry name" value="Ig-like_dom"/>
</dbReference>
<dbReference type="InterPro" id="IPR036179">
    <property type="entry name" value="Ig-like_dom_sf"/>
</dbReference>
<dbReference type="InterPro" id="IPR013783">
    <property type="entry name" value="Ig-like_fold"/>
</dbReference>
<dbReference type="InterPro" id="IPR003599">
    <property type="entry name" value="Ig_sub"/>
</dbReference>
<dbReference type="InterPro" id="IPR013106">
    <property type="entry name" value="Ig_V-set"/>
</dbReference>
<dbReference type="InterPro" id="IPR050150">
    <property type="entry name" value="IgV_Light_Chain"/>
</dbReference>
<dbReference type="PANTHER" id="PTHR23267">
    <property type="entry name" value="IMMUNOGLOBULIN LIGHT CHAIN"/>
    <property type="match status" value="1"/>
</dbReference>
<dbReference type="Pfam" id="PF07686">
    <property type="entry name" value="V-set"/>
    <property type="match status" value="1"/>
</dbReference>
<dbReference type="SMART" id="SM00409">
    <property type="entry name" value="IG"/>
    <property type="match status" value="1"/>
</dbReference>
<dbReference type="SMART" id="SM00406">
    <property type="entry name" value="IGv"/>
    <property type="match status" value="1"/>
</dbReference>
<dbReference type="SUPFAM" id="SSF48726">
    <property type="entry name" value="Immunoglobulin"/>
    <property type="match status" value="1"/>
</dbReference>
<dbReference type="PROSITE" id="PS50835">
    <property type="entry name" value="IG_LIKE"/>
    <property type="match status" value="1"/>
</dbReference>
<sequence length="117" mass="12468">MAWTPLFLFLLTCCPGSNSQAVVTQEPSLTVSPGGTVTLTCGSSTGAVTSGHYPYWFQQKPGQAPRTLIYDTSNKHSWTPARFSGSLLGGKAALTLLGAQPEDEAEYYCLLSYSGAR</sequence>
<reference key="1">
    <citation type="journal article" date="1999" name="Nature">
        <title>The DNA sequence of human chromosome 22.</title>
        <authorList>
            <person name="Dunham I."/>
            <person name="Hunt A.R."/>
            <person name="Collins J.E."/>
            <person name="Bruskiewich R."/>
            <person name="Beare D.M."/>
            <person name="Clamp M."/>
            <person name="Smink L.J."/>
            <person name="Ainscough R."/>
            <person name="Almeida J.P."/>
            <person name="Babbage A.K."/>
            <person name="Bagguley C."/>
            <person name="Bailey J."/>
            <person name="Barlow K.F."/>
            <person name="Bates K.N."/>
            <person name="Beasley O.P."/>
            <person name="Bird C.P."/>
            <person name="Blakey S.E."/>
            <person name="Bridgeman A.M."/>
            <person name="Buck D."/>
            <person name="Burgess J."/>
            <person name="Burrill W.D."/>
            <person name="Burton J."/>
            <person name="Carder C."/>
            <person name="Carter N.P."/>
            <person name="Chen Y."/>
            <person name="Clark G."/>
            <person name="Clegg S.M."/>
            <person name="Cobley V.E."/>
            <person name="Cole C.G."/>
            <person name="Collier R.E."/>
            <person name="Connor R."/>
            <person name="Conroy D."/>
            <person name="Corby N.R."/>
            <person name="Coville G.J."/>
            <person name="Cox A.V."/>
            <person name="Davis J."/>
            <person name="Dawson E."/>
            <person name="Dhami P.D."/>
            <person name="Dockree C."/>
            <person name="Dodsworth S.J."/>
            <person name="Durbin R.M."/>
            <person name="Ellington A.G."/>
            <person name="Evans K.L."/>
            <person name="Fey J.M."/>
            <person name="Fleming K."/>
            <person name="French L."/>
            <person name="Garner A.A."/>
            <person name="Gilbert J.G.R."/>
            <person name="Goward M.E."/>
            <person name="Grafham D.V."/>
            <person name="Griffiths M.N.D."/>
            <person name="Hall C."/>
            <person name="Hall R.E."/>
            <person name="Hall-Tamlyn G."/>
            <person name="Heathcott R.W."/>
            <person name="Ho S."/>
            <person name="Holmes S."/>
            <person name="Hunt S.E."/>
            <person name="Jones M.C."/>
            <person name="Kershaw J."/>
            <person name="Kimberley A.M."/>
            <person name="King A."/>
            <person name="Laird G.K."/>
            <person name="Langford C.F."/>
            <person name="Leversha M.A."/>
            <person name="Lloyd C."/>
            <person name="Lloyd D.M."/>
            <person name="Martyn I.D."/>
            <person name="Mashreghi-Mohammadi M."/>
            <person name="Matthews L.H."/>
            <person name="Mccann O.T."/>
            <person name="Mcclay J."/>
            <person name="Mclaren S."/>
            <person name="McMurray A.A."/>
            <person name="Milne S.A."/>
            <person name="Mortimore B.J."/>
            <person name="Odell C.N."/>
            <person name="Pavitt R."/>
            <person name="Pearce A.V."/>
            <person name="Pearson D."/>
            <person name="Phillimore B.J.C.T."/>
            <person name="Phillips S.H."/>
            <person name="Plumb R.W."/>
            <person name="Ramsay H."/>
            <person name="Ramsey Y."/>
            <person name="Rogers L."/>
            <person name="Ross M.T."/>
            <person name="Scott C.E."/>
            <person name="Sehra H.K."/>
            <person name="Skuce C.D."/>
            <person name="Smalley S."/>
            <person name="Smith M.L."/>
            <person name="Soderlund C."/>
            <person name="Spragon L."/>
            <person name="Steward C.A."/>
            <person name="Sulston J.E."/>
            <person name="Swann R.M."/>
            <person name="Vaudin M."/>
            <person name="Wall M."/>
            <person name="Wallis J.M."/>
            <person name="Whiteley M.N."/>
            <person name="Willey D.L."/>
            <person name="Williams L."/>
            <person name="Williams S.A."/>
            <person name="Williamson H."/>
            <person name="Wilmer T.E."/>
            <person name="Wilming L."/>
            <person name="Wright C.L."/>
            <person name="Hubbard T."/>
            <person name="Bentley D.R."/>
            <person name="Beck S."/>
            <person name="Rogers J."/>
            <person name="Shimizu N."/>
            <person name="Minoshima S."/>
            <person name="Kawasaki K."/>
            <person name="Sasaki T."/>
            <person name="Asakawa S."/>
            <person name="Kudoh J."/>
            <person name="Shintani A."/>
            <person name="Shibuya K."/>
            <person name="Yoshizaki Y."/>
            <person name="Aoki N."/>
            <person name="Mitsuyama S."/>
            <person name="Roe B.A."/>
            <person name="Chen F."/>
            <person name="Chu L."/>
            <person name="Crabtree J."/>
            <person name="Deschamps S."/>
            <person name="Do A."/>
            <person name="Do T."/>
            <person name="Dorman A."/>
            <person name="Fang F."/>
            <person name="Fu Y."/>
            <person name="Hu P."/>
            <person name="Hua A."/>
            <person name="Kenton S."/>
            <person name="Lai H."/>
            <person name="Lao H.I."/>
            <person name="Lewis J."/>
            <person name="Lewis S."/>
            <person name="Lin S.-P."/>
            <person name="Loh P."/>
            <person name="Malaj E."/>
            <person name="Nguyen T."/>
            <person name="Pan H."/>
            <person name="Phan S."/>
            <person name="Qi S."/>
            <person name="Qian Y."/>
            <person name="Ray L."/>
            <person name="Ren Q."/>
            <person name="Shaull S."/>
            <person name="Sloan D."/>
            <person name="Song L."/>
            <person name="Wang Q."/>
            <person name="Wang Y."/>
            <person name="Wang Z."/>
            <person name="White J."/>
            <person name="Willingham D."/>
            <person name="Wu H."/>
            <person name="Yao Z."/>
            <person name="Zhan M."/>
            <person name="Zhang G."/>
            <person name="Chissoe S."/>
            <person name="Murray J."/>
            <person name="Miller N."/>
            <person name="Minx P."/>
            <person name="Fulton R."/>
            <person name="Johnson D."/>
            <person name="Bemis G."/>
            <person name="Bentley D."/>
            <person name="Bradshaw H."/>
            <person name="Bourne S."/>
            <person name="Cordes M."/>
            <person name="Du Z."/>
            <person name="Fulton L."/>
            <person name="Goela D."/>
            <person name="Graves T."/>
            <person name="Hawkins J."/>
            <person name="Hinds K."/>
            <person name="Kemp K."/>
            <person name="Latreille P."/>
            <person name="Layman D."/>
            <person name="Ozersky P."/>
            <person name="Rohlfing T."/>
            <person name="Scheet P."/>
            <person name="Walker C."/>
            <person name="Wamsley A."/>
            <person name="Wohldmann P."/>
            <person name="Pepin K."/>
            <person name="Nelson J."/>
            <person name="Korf I."/>
            <person name="Bedell J.A."/>
            <person name="Hillier L.W."/>
            <person name="Mardis E."/>
            <person name="Waterston R."/>
            <person name="Wilson R."/>
            <person name="Emanuel B.S."/>
            <person name="Shaikh T."/>
            <person name="Kurahashi H."/>
            <person name="Saitta S."/>
            <person name="Budarf M.L."/>
            <person name="McDermid H.E."/>
            <person name="Johnson A."/>
            <person name="Wong A.C.C."/>
            <person name="Morrow B.E."/>
            <person name="Edelmann L."/>
            <person name="Kim U.J."/>
            <person name="Shizuya H."/>
            <person name="Simon M.I."/>
            <person name="Dumanski J.P."/>
            <person name="Peyrard M."/>
            <person name="Kedra D."/>
            <person name="Seroussi E."/>
            <person name="Fransson I."/>
            <person name="Tapia I."/>
            <person name="Bruder C.E."/>
            <person name="O'Brien K.P."/>
            <person name="Wilkinson P."/>
            <person name="Bodenteich A."/>
            <person name="Hartman K."/>
            <person name="Hu X."/>
            <person name="Khan A.S."/>
            <person name="Lane L."/>
            <person name="Tilahun Y."/>
            <person name="Wright H."/>
        </authorList>
    </citation>
    <scope>NUCLEOTIDE SEQUENCE [LARGE SCALE GENOMIC DNA] (IMGT ALLELE IGLV7-46*02)</scope>
</reference>
<reference key="2">
    <citation type="journal article" date="2001" name="Exp. Clin. Immunogenet.">
        <title>Nomenclature of the human immunoglobulin lambda (IGL) genes.</title>
        <authorList>
            <person name="Lefranc M.P."/>
        </authorList>
    </citation>
    <scope>NOMENCLATURE</scope>
</reference>
<reference key="3">
    <citation type="book" date="2001" name="The Immunoglobulin FactsBook.">
        <title>The Immunoglobulin FactsBook.</title>
        <editorList>
            <person name="Lefranc M.P."/>
            <person name="Lefranc G."/>
        </editorList>
        <authorList>
            <person name="Lefranc M.P."/>
            <person name="Lefranc G."/>
        </authorList>
    </citation>
    <scope>NOMENCLATURE</scope>
</reference>
<reference key="4">
    <citation type="journal article" date="2007" name="Annu. Rev. Genet.">
        <title>Immunoglobulin somatic hypermutation.</title>
        <authorList>
            <person name="Teng G."/>
            <person name="Papavasiliou F.N."/>
        </authorList>
    </citation>
    <scope>REVIEW ON SOMATIC HYPERMUTATION</scope>
</reference>
<reference key="5">
    <citation type="journal article" date="2010" name="J. Allergy Clin. Immunol.">
        <title>Structure and function of immunoglobulins.</title>
        <authorList>
            <person name="Schroeder H.W. Jr."/>
            <person name="Cavacini L."/>
        </authorList>
    </citation>
    <scope>REVIEW ON IMMUNOGLOBULINS</scope>
</reference>
<reference key="6">
    <citation type="journal article" date="2012" name="Nat. Rev. Immunol.">
        <title>Molecular programming of B cell memory.</title>
        <authorList>
            <person name="McHeyzer-Williams M."/>
            <person name="Okitsu S."/>
            <person name="Wang N."/>
            <person name="McHeyzer-Williams L."/>
        </authorList>
    </citation>
    <scope>REVIEW ON FUNCTION</scope>
</reference>
<reference key="7">
    <citation type="journal article" date="2014" name="Front. Immunol.">
        <title>Immunoglobulin and T Cell Receptor Genes: IMGT((R)) and the Birth and Rise of Immunoinformatics.</title>
        <authorList>
            <person name="Lefranc M.P."/>
        </authorList>
    </citation>
    <scope>NOMENCLATURE</scope>
</reference>
<keyword id="KW-1064">Adaptive immunity</keyword>
<keyword id="KW-1003">Cell membrane</keyword>
<keyword id="KW-1015">Disulfide bond</keyword>
<keyword id="KW-0391">Immunity</keyword>
<keyword id="KW-1280">Immunoglobulin</keyword>
<keyword id="KW-0393">Immunoglobulin domain</keyword>
<keyword id="KW-0472">Membrane</keyword>
<keyword id="KW-1267">Proteomics identification</keyword>
<keyword id="KW-1185">Reference proteome</keyword>
<keyword id="KW-0964">Secreted</keyword>
<keyword id="KW-0732">Signal</keyword>
<name>LV746_HUMAN</name>
<gene>
    <name evidence="4 9" type="primary">IGLV7-46</name>
</gene>
<proteinExistence type="evidence at protein level"/>
<organism>
    <name type="scientific">Homo sapiens</name>
    <name type="common">Human</name>
    <dbReference type="NCBI Taxonomy" id="9606"/>
    <lineage>
        <taxon>Eukaryota</taxon>
        <taxon>Metazoa</taxon>
        <taxon>Chordata</taxon>
        <taxon>Craniata</taxon>
        <taxon>Vertebrata</taxon>
        <taxon>Euteleostomi</taxon>
        <taxon>Mammalia</taxon>
        <taxon>Eutheria</taxon>
        <taxon>Euarchontoglires</taxon>
        <taxon>Primates</taxon>
        <taxon>Haplorrhini</taxon>
        <taxon>Catarrhini</taxon>
        <taxon>Hominidae</taxon>
        <taxon>Homo</taxon>
    </lineage>
</organism>
<protein>
    <recommendedName>
        <fullName evidence="4 9">Immunoglobulin lambda variable 7-46</fullName>
    </recommendedName>
</protein>
<feature type="signal peptide" evidence="2">
    <location>
        <begin position="1"/>
        <end position="19"/>
    </location>
</feature>
<feature type="chain" id="PRO_5001705170" description="Immunoglobulin lambda variable 7-46" evidence="2">
    <location>
        <begin position="20"/>
        <end position="117"/>
    </location>
</feature>
<feature type="domain" description="Ig-like" evidence="3">
    <location>
        <begin position="20"/>
        <end position="117" status="greater than"/>
    </location>
</feature>
<feature type="region of interest" description="Framework-1" evidence="1">
    <location>
        <begin position="20"/>
        <end position="44"/>
    </location>
</feature>
<feature type="region of interest" description="Complementarity-determining-1" evidence="1">
    <location>
        <begin position="45"/>
        <end position="53"/>
    </location>
</feature>
<feature type="region of interest" description="Framework-2" evidence="1">
    <location>
        <begin position="54"/>
        <end position="70"/>
    </location>
</feature>
<feature type="region of interest" description="Complementarity-determining-2" evidence="1">
    <location>
        <begin position="71"/>
        <end position="73"/>
    </location>
</feature>
<feature type="region of interest" description="Framework-3" evidence="1">
    <location>
        <begin position="74"/>
        <end position="109"/>
    </location>
</feature>
<feature type="region of interest" description="Complementarity-determining-3" evidence="1">
    <location>
        <begin position="110"/>
        <end position="117" status="greater than"/>
    </location>
</feature>
<feature type="disulfide bond" evidence="3">
    <location>
        <begin position="41"/>
        <end position="109"/>
    </location>
</feature>
<feature type="non-terminal residue">
    <location>
        <position position="117"/>
    </location>
</feature>
<comment type="function">
    <text evidence="5 6 7 8">V region of the variable domain of immunoglobulin light chains that participates in the antigen recognition (PubMed:24600447). Immunoglobulins, also known as antibodies, are membrane-bound or secreted glycoproteins produced by B lymphocytes. In the recognition phase of humoral immunity, the membrane-bound immunoglobulins serve as receptors which, upon binding of a specific antigen, trigger the clonal expansion and differentiation of B lymphocytes into immunoglobulins-secreting plasma cells. Secreted immunoglobulins mediate the effector phase of humoral immunity, which results in the elimination of bound antigens (PubMed:20176268, PubMed:22158414). The antigen binding site is formed by the variable domain of one heavy chain, together with that of its associated light chain. Thus, each immunoglobulin has two antigen binding sites with remarkable affinity for a particular antigen. The variable domains are assembled by a process called V-(D)-J rearrangement and can then be subjected to somatic hypermutations which, after exposure to antigen and selection, allow affinity maturation for a particular antigen (PubMed:17576170, PubMed:20176268).</text>
</comment>
<comment type="subunit">
    <text evidence="6">Immunoglobulins are composed of two identical heavy chains and two identical light chains; disulfide-linked.</text>
</comment>
<comment type="subcellular location">
    <subcellularLocation>
        <location evidence="6 7">Secreted</location>
    </subcellularLocation>
    <subcellularLocation>
        <location evidence="6 7">Cell membrane</location>
    </subcellularLocation>
</comment>
<comment type="polymorphism">
    <text>There are several alleles. The sequence shown is that of IMGT allele IGLV7-46*02.</text>
</comment>
<comment type="caution">
    <text evidence="10">For an example of a full-length immunoglobulin lambda light chain see AC P0DOX8.</text>
</comment>
<evidence type="ECO:0000250" key="1">
    <source>
        <dbReference type="UniProtKB" id="P01721"/>
    </source>
</evidence>
<evidence type="ECO:0000255" key="2"/>
<evidence type="ECO:0000255" key="3">
    <source>
        <dbReference type="PROSITE-ProRule" id="PRU00114"/>
    </source>
</evidence>
<evidence type="ECO:0000303" key="4">
    <source>
    </source>
</evidence>
<evidence type="ECO:0000303" key="5">
    <source>
    </source>
</evidence>
<evidence type="ECO:0000303" key="6">
    <source>
    </source>
</evidence>
<evidence type="ECO:0000303" key="7">
    <source>
    </source>
</evidence>
<evidence type="ECO:0000303" key="8">
    <source>
    </source>
</evidence>
<evidence type="ECO:0000303" key="9">
    <source ref="3"/>
</evidence>
<evidence type="ECO:0000305" key="10"/>